<dbReference type="EC" id="2.1.1.319" evidence="1"/>
<dbReference type="EMBL" id="JQ313903">
    <property type="protein sequence ID" value="AFH41797.1"/>
    <property type="molecule type" value="mRNA"/>
</dbReference>
<dbReference type="EMBL" id="AC005837">
    <property type="status" value="NOT_ANNOTATED_CDS"/>
    <property type="molecule type" value="Genomic_DNA"/>
</dbReference>
<dbReference type="EMBL" id="CH471099">
    <property type="protein sequence ID" value="EAW89435.1"/>
    <property type="molecule type" value="Genomic_DNA"/>
</dbReference>
<dbReference type="EMBL" id="CH471099">
    <property type="protein sequence ID" value="EAW89437.1"/>
    <property type="molecule type" value="Genomic_DNA"/>
</dbReference>
<dbReference type="EMBL" id="BC045819">
    <property type="protein sequence ID" value="AAH45819.1"/>
    <property type="status" value="ALT_INIT"/>
    <property type="molecule type" value="mRNA"/>
</dbReference>
<dbReference type="CCDS" id="CCDS45787.1">
    <molecule id="Q86XA0-1"/>
</dbReference>
<dbReference type="CCDS" id="CCDS59298.1">
    <molecule id="Q86XA0-2"/>
</dbReference>
<dbReference type="RefSeq" id="NP_001073979.3">
    <molecule id="Q86XA0-1"/>
    <property type="nucleotide sequence ID" value="NM_001080510.5"/>
</dbReference>
<dbReference type="RefSeq" id="NP_001193912.1">
    <molecule id="Q86XA0-1"/>
    <property type="nucleotide sequence ID" value="NM_001206983.3"/>
</dbReference>
<dbReference type="RefSeq" id="NP_001193913.1">
    <molecule id="Q86XA0-1"/>
    <property type="nucleotide sequence ID" value="NM_001206984.3"/>
</dbReference>
<dbReference type="RefSeq" id="NP_001193914.1">
    <molecule id="Q86XA0-2"/>
    <property type="nucleotide sequence ID" value="NM_001206985.3"/>
</dbReference>
<dbReference type="RefSeq" id="NP_001193915.1">
    <molecule id="Q86XA0-2"/>
    <property type="nucleotide sequence ID" value="NM_001206986.3"/>
</dbReference>
<dbReference type="RefSeq" id="NP_001193916.1">
    <molecule id="Q86XA0-2"/>
    <property type="nucleotide sequence ID" value="NM_001206987.3"/>
</dbReference>
<dbReference type="RefSeq" id="NP_001289632.1">
    <molecule id="Q86XA0-1"/>
    <property type="nucleotide sequence ID" value="NM_001302703.2"/>
</dbReference>
<dbReference type="RefSeq" id="NP_001289633.1">
    <molecule id="Q86XA0-2"/>
    <property type="nucleotide sequence ID" value="NM_001302704.2"/>
</dbReference>
<dbReference type="RefSeq" id="NP_001289634.1">
    <property type="nucleotide sequence ID" value="NM_001302705.1"/>
</dbReference>
<dbReference type="RefSeq" id="NP_001365277.1">
    <molecule id="Q86XA0-1"/>
    <property type="nucleotide sequence ID" value="NM_001378348.1"/>
</dbReference>
<dbReference type="RefSeq" id="NP_001365278.1">
    <molecule id="Q86XA0-1"/>
    <property type="nucleotide sequence ID" value="NM_001378349.1"/>
</dbReference>
<dbReference type="RefSeq" id="NP_001365283.1">
    <molecule id="Q86XA0-2"/>
    <property type="nucleotide sequence ID" value="NM_001378354.1"/>
</dbReference>
<dbReference type="RefSeq" id="XP_006721737.1">
    <property type="nucleotide sequence ID" value="XM_006721674.3"/>
</dbReference>
<dbReference type="RefSeq" id="XP_006721743.1">
    <property type="nucleotide sequence ID" value="XM_006721680.2"/>
</dbReference>
<dbReference type="RefSeq" id="XP_047291263.1">
    <molecule id="Q86XA0-1"/>
    <property type="nucleotide sequence ID" value="XM_047435307.1"/>
</dbReference>
<dbReference type="RefSeq" id="XP_047291265.1">
    <molecule id="Q86XA0-2"/>
    <property type="nucleotide sequence ID" value="XM_047435309.1"/>
</dbReference>
<dbReference type="RefSeq" id="XP_047291266.1">
    <molecule id="Q86XA0-2"/>
    <property type="nucleotide sequence ID" value="XM_047435310.1"/>
</dbReference>
<dbReference type="RefSeq" id="XP_054170951.1">
    <molecule id="Q86XA0-1"/>
    <property type="nucleotide sequence ID" value="XM_054314976.1"/>
</dbReference>
<dbReference type="RefSeq" id="XP_054170953.1">
    <molecule id="Q86XA0-2"/>
    <property type="nucleotide sequence ID" value="XM_054314978.1"/>
</dbReference>
<dbReference type="RefSeq" id="XP_054170954.1">
    <molecule id="Q86XA0-2"/>
    <property type="nucleotide sequence ID" value="XM_054314979.1"/>
</dbReference>
<dbReference type="SMR" id="Q86XA0"/>
<dbReference type="BioGRID" id="125870">
    <property type="interactions" value="30"/>
</dbReference>
<dbReference type="FunCoup" id="Q86XA0">
    <property type="interactions" value="2219"/>
</dbReference>
<dbReference type="IntAct" id="Q86XA0">
    <property type="interactions" value="3"/>
</dbReference>
<dbReference type="MINT" id="Q86XA0"/>
<dbReference type="STRING" id="9606.ENSP00000482599"/>
<dbReference type="iPTMnet" id="Q86XA0"/>
<dbReference type="PhosphoSitePlus" id="Q86XA0"/>
<dbReference type="BioMuta" id="METTL23"/>
<dbReference type="DMDM" id="269849695"/>
<dbReference type="MassIVE" id="Q86XA0"/>
<dbReference type="PaxDb" id="9606-ENSP00000482599"/>
<dbReference type="PeptideAtlas" id="Q86XA0"/>
<dbReference type="Antibodypedia" id="9811">
    <property type="antibodies" value="10 antibodies from 8 providers"/>
</dbReference>
<dbReference type="DNASU" id="124512"/>
<dbReference type="Ensembl" id="ENST00000341249.11">
    <molecule id="Q86XA0-1"/>
    <property type="protein sequence ID" value="ENSP00000341543.5"/>
    <property type="gene ID" value="ENSG00000181038.14"/>
</dbReference>
<dbReference type="Ensembl" id="ENST00000586752.5">
    <molecule id="Q86XA0-2"/>
    <property type="protein sequence ID" value="ENSP00000466203.1"/>
    <property type="gene ID" value="ENSG00000181038.14"/>
</dbReference>
<dbReference type="Ensembl" id="ENST00000588822.1">
    <molecule id="Q86XA0-2"/>
    <property type="protein sequence ID" value="ENSP00000465430.1"/>
    <property type="gene ID" value="ENSG00000181038.14"/>
</dbReference>
<dbReference type="Ensembl" id="ENST00000590964.5">
    <molecule id="Q86XA0-2"/>
    <property type="protein sequence ID" value="ENSP00000465890.1"/>
    <property type="gene ID" value="ENSG00000181038.14"/>
</dbReference>
<dbReference type="Ensembl" id="ENST00000615984.4">
    <molecule id="Q86XA0-1"/>
    <property type="protein sequence ID" value="ENSP00000482599.1"/>
    <property type="gene ID" value="ENSG00000181038.14"/>
</dbReference>
<dbReference type="GeneID" id="124512"/>
<dbReference type="KEGG" id="hsa:124512"/>
<dbReference type="MANE-Select" id="ENST00000341249.11">
    <property type="protein sequence ID" value="ENSP00000341543.5"/>
    <property type="RefSeq nucleotide sequence ID" value="NM_001080510.5"/>
    <property type="RefSeq protein sequence ID" value="NP_001073979.3"/>
</dbReference>
<dbReference type="UCSC" id="uc002jsr.4">
    <molecule id="Q86XA0-1"/>
    <property type="organism name" value="human"/>
</dbReference>
<dbReference type="AGR" id="HGNC:26988"/>
<dbReference type="CTD" id="124512"/>
<dbReference type="DisGeNET" id="124512"/>
<dbReference type="GeneCards" id="METTL23"/>
<dbReference type="HGNC" id="HGNC:26988">
    <property type="gene designation" value="METTL23"/>
</dbReference>
<dbReference type="HPA" id="ENSG00000181038">
    <property type="expression patterns" value="Low tissue specificity"/>
</dbReference>
<dbReference type="MalaCards" id="METTL23"/>
<dbReference type="MIM" id="615262">
    <property type="type" value="gene"/>
</dbReference>
<dbReference type="MIM" id="615942">
    <property type="type" value="phenotype"/>
</dbReference>
<dbReference type="neXtProt" id="NX_Q86XA0"/>
<dbReference type="OpenTargets" id="ENSG00000181038"/>
<dbReference type="Orphanet" id="88616">
    <property type="disease" value="Autosomal recessive non-syndromic intellectual disability"/>
</dbReference>
<dbReference type="PharmGKB" id="PA162378566"/>
<dbReference type="VEuPathDB" id="HostDB:ENSG00000181038"/>
<dbReference type="eggNOG" id="KOG2793">
    <property type="taxonomic scope" value="Eukaryota"/>
</dbReference>
<dbReference type="GeneTree" id="ENSGT00510000048008"/>
<dbReference type="InParanoid" id="Q86XA0"/>
<dbReference type="OMA" id="VIGITWG"/>
<dbReference type="OrthoDB" id="407325at2759"/>
<dbReference type="PAN-GO" id="Q86XA0">
    <property type="GO annotations" value="2 GO annotations based on evolutionary models"/>
</dbReference>
<dbReference type="PhylomeDB" id="Q86XA0"/>
<dbReference type="TreeFam" id="TF352729"/>
<dbReference type="PathwayCommons" id="Q86XA0"/>
<dbReference type="Reactome" id="R-HSA-9821002">
    <property type="pathway name" value="Chromatin modifications during the maternal to zygotic transition (MZT)"/>
</dbReference>
<dbReference type="Reactome" id="R-HSA-9821993">
    <property type="pathway name" value="Replacement of protamines by nucleosomes in the male pronucleus"/>
</dbReference>
<dbReference type="SignaLink" id="Q86XA0"/>
<dbReference type="BioGRID-ORCS" id="124512">
    <property type="hits" value="69 hits in 1157 CRISPR screens"/>
</dbReference>
<dbReference type="ChiTaRS" id="METTL23">
    <property type="organism name" value="human"/>
</dbReference>
<dbReference type="GenomeRNAi" id="124512"/>
<dbReference type="Pharos" id="Q86XA0">
    <property type="development level" value="Tdark"/>
</dbReference>
<dbReference type="PRO" id="PR:Q86XA0"/>
<dbReference type="Proteomes" id="UP000005640">
    <property type="component" value="Chromosome 17"/>
</dbReference>
<dbReference type="RNAct" id="Q86XA0">
    <property type="molecule type" value="protein"/>
</dbReference>
<dbReference type="Bgee" id="ENSG00000181038">
    <property type="expression patterns" value="Expressed in kidney epithelium and 198 other cell types or tissues"/>
</dbReference>
<dbReference type="ExpressionAtlas" id="Q86XA0">
    <property type="expression patterns" value="baseline and differential"/>
</dbReference>
<dbReference type="GO" id="GO:0005737">
    <property type="term" value="C:cytoplasm"/>
    <property type="evidence" value="ECO:0000314"/>
    <property type="project" value="UniProtKB"/>
</dbReference>
<dbReference type="GO" id="GO:0001939">
    <property type="term" value="C:female pronucleus"/>
    <property type="evidence" value="ECO:0000250"/>
    <property type="project" value="UniProtKB"/>
</dbReference>
<dbReference type="GO" id="GO:0001940">
    <property type="term" value="C:male pronucleus"/>
    <property type="evidence" value="ECO:0000250"/>
    <property type="project" value="UniProtKB"/>
</dbReference>
<dbReference type="GO" id="GO:0005634">
    <property type="term" value="C:nucleus"/>
    <property type="evidence" value="ECO:0000314"/>
    <property type="project" value="UniProtKB"/>
</dbReference>
<dbReference type="GO" id="GO:0032991">
    <property type="term" value="C:protein-containing complex"/>
    <property type="evidence" value="ECO:0000314"/>
    <property type="project" value="UniProtKB"/>
</dbReference>
<dbReference type="GO" id="GO:0140297">
    <property type="term" value="F:DNA-binding transcription factor binding"/>
    <property type="evidence" value="ECO:0000353"/>
    <property type="project" value="UniProtKB"/>
</dbReference>
<dbReference type="GO" id="GO:0031072">
    <property type="term" value="F:heat shock protein binding"/>
    <property type="evidence" value="ECO:0000353"/>
    <property type="project" value="UniProtKB"/>
</dbReference>
<dbReference type="GO" id="GO:0035642">
    <property type="term" value="F:histone H3R17 methyltransferase activity"/>
    <property type="evidence" value="ECO:0000250"/>
    <property type="project" value="UniProtKB"/>
</dbReference>
<dbReference type="GO" id="GO:0035242">
    <property type="term" value="F:protein-arginine omega-N asymmetric methyltransferase activity"/>
    <property type="evidence" value="ECO:0007669"/>
    <property type="project" value="RHEA"/>
</dbReference>
<dbReference type="GO" id="GO:0050890">
    <property type="term" value="P:cognition"/>
    <property type="evidence" value="ECO:0000315"/>
    <property type="project" value="UniProtKB"/>
</dbReference>
<dbReference type="GO" id="GO:0044727">
    <property type="term" value="P:epigenetic programing of male pronucleus"/>
    <property type="evidence" value="ECO:0000250"/>
    <property type="project" value="UniProtKB"/>
</dbReference>
<dbReference type="GO" id="GO:0044725">
    <property type="term" value="P:epigenetic programming in the zygotic pronuclei"/>
    <property type="evidence" value="ECO:0000250"/>
    <property type="project" value="UniProtKB"/>
</dbReference>
<dbReference type="GO" id="GO:0040029">
    <property type="term" value="P:epigenetic regulation of gene expression"/>
    <property type="evidence" value="ECO:0000318"/>
    <property type="project" value="GO_Central"/>
</dbReference>
<dbReference type="GO" id="GO:0032259">
    <property type="term" value="P:methylation"/>
    <property type="evidence" value="ECO:0007669"/>
    <property type="project" value="UniProtKB-KW"/>
</dbReference>
<dbReference type="GO" id="GO:0045944">
    <property type="term" value="P:positive regulation of transcription by RNA polymerase II"/>
    <property type="evidence" value="ECO:0000315"/>
    <property type="project" value="UniProtKB"/>
</dbReference>
<dbReference type="CDD" id="cd02440">
    <property type="entry name" value="AdoMet_MTases"/>
    <property type="match status" value="1"/>
</dbReference>
<dbReference type="FunFam" id="3.40.50.150:FF:000173">
    <property type="entry name" value="methyltransferase-like protein 23 isoform X1"/>
    <property type="match status" value="1"/>
</dbReference>
<dbReference type="Gene3D" id="3.40.50.150">
    <property type="entry name" value="Vaccinia Virus protein VP39"/>
    <property type="match status" value="1"/>
</dbReference>
<dbReference type="InterPro" id="IPR019410">
    <property type="entry name" value="Methyltransf_16"/>
</dbReference>
<dbReference type="InterPro" id="IPR029063">
    <property type="entry name" value="SAM-dependent_MTases_sf"/>
</dbReference>
<dbReference type="PANTHER" id="PTHR14614">
    <property type="entry name" value="HEPATOCELLULAR CARCINOMA-ASSOCIATED ANTIGEN"/>
    <property type="match status" value="1"/>
</dbReference>
<dbReference type="PANTHER" id="PTHR14614:SF164">
    <property type="entry name" value="HISTONE-ARGININE METHYLTRANSFERASE METTL23"/>
    <property type="match status" value="1"/>
</dbReference>
<dbReference type="Pfam" id="PF10294">
    <property type="entry name" value="Methyltransf_16"/>
    <property type="match status" value="1"/>
</dbReference>
<dbReference type="SUPFAM" id="SSF53335">
    <property type="entry name" value="S-adenosyl-L-methionine-dependent methyltransferases"/>
    <property type="match status" value="1"/>
</dbReference>
<proteinExistence type="evidence at protein level"/>
<sequence>MYVWPCAVVLAQYLWFHRRSLPGKAILEIGAGVSLPGILAAKCGAEVILSDSSELPHCLEVCRQSCQMNNLPHLQVVGLTWGHISWDLLALPPQDIILASDVFFEPEDFEDILATIYFLMHKNPKVQLWSTYQVRSADWSLEALLYKWDMKCVHIPLESFDADKEDIAESTLPGRHTVEMLVISFAKDSL</sequence>
<reference key="1">
    <citation type="submission" date="2011-12" db="EMBL/GenBank/DDBJ databases">
        <title>Isolation of a novel GABPalpha-interacting co-factor, E4TF-1 Binding Methyltransferase (EBM), which encodes a putative methyltransferase.</title>
        <authorList>
            <person name="Baron B.M."/>
        </authorList>
    </citation>
    <scope>NUCLEOTIDE SEQUENCE [MRNA] (ISOFORM 1)</scope>
</reference>
<reference key="2">
    <citation type="journal article" date="2006" name="Nature">
        <title>DNA sequence of human chromosome 17 and analysis of rearrangement in the human lineage.</title>
        <authorList>
            <person name="Zody M.C."/>
            <person name="Garber M."/>
            <person name="Adams D.J."/>
            <person name="Sharpe T."/>
            <person name="Harrow J."/>
            <person name="Lupski J.R."/>
            <person name="Nicholson C."/>
            <person name="Searle S.M."/>
            <person name="Wilming L."/>
            <person name="Young S.K."/>
            <person name="Abouelleil A."/>
            <person name="Allen N.R."/>
            <person name="Bi W."/>
            <person name="Bloom T."/>
            <person name="Borowsky M.L."/>
            <person name="Bugalter B.E."/>
            <person name="Butler J."/>
            <person name="Chang J.L."/>
            <person name="Chen C.-K."/>
            <person name="Cook A."/>
            <person name="Corum B."/>
            <person name="Cuomo C.A."/>
            <person name="de Jong P.J."/>
            <person name="DeCaprio D."/>
            <person name="Dewar K."/>
            <person name="FitzGerald M."/>
            <person name="Gilbert J."/>
            <person name="Gibson R."/>
            <person name="Gnerre S."/>
            <person name="Goldstein S."/>
            <person name="Grafham D.V."/>
            <person name="Grocock R."/>
            <person name="Hafez N."/>
            <person name="Hagopian D.S."/>
            <person name="Hart E."/>
            <person name="Norman C.H."/>
            <person name="Humphray S."/>
            <person name="Jaffe D.B."/>
            <person name="Jones M."/>
            <person name="Kamal M."/>
            <person name="Khodiyar V.K."/>
            <person name="LaButti K."/>
            <person name="Laird G."/>
            <person name="Lehoczky J."/>
            <person name="Liu X."/>
            <person name="Lokyitsang T."/>
            <person name="Loveland J."/>
            <person name="Lui A."/>
            <person name="Macdonald P."/>
            <person name="Major J.E."/>
            <person name="Matthews L."/>
            <person name="Mauceli E."/>
            <person name="McCarroll S.A."/>
            <person name="Mihalev A.H."/>
            <person name="Mudge J."/>
            <person name="Nguyen C."/>
            <person name="Nicol R."/>
            <person name="O'Leary S.B."/>
            <person name="Osoegawa K."/>
            <person name="Schwartz D.C."/>
            <person name="Shaw-Smith C."/>
            <person name="Stankiewicz P."/>
            <person name="Steward C."/>
            <person name="Swarbreck D."/>
            <person name="Venkataraman V."/>
            <person name="Whittaker C.A."/>
            <person name="Yang X."/>
            <person name="Zimmer A.R."/>
            <person name="Bradley A."/>
            <person name="Hubbard T."/>
            <person name="Birren B.W."/>
            <person name="Rogers J."/>
            <person name="Lander E.S."/>
            <person name="Nusbaum C."/>
        </authorList>
    </citation>
    <scope>NUCLEOTIDE SEQUENCE [LARGE SCALE GENOMIC DNA]</scope>
</reference>
<reference key="3">
    <citation type="submission" date="2005-07" db="EMBL/GenBank/DDBJ databases">
        <authorList>
            <person name="Mural R.J."/>
            <person name="Istrail S."/>
            <person name="Sutton G."/>
            <person name="Florea L."/>
            <person name="Halpern A.L."/>
            <person name="Mobarry C.M."/>
            <person name="Lippert R."/>
            <person name="Walenz B."/>
            <person name="Shatkay H."/>
            <person name="Dew I."/>
            <person name="Miller J.R."/>
            <person name="Flanigan M.J."/>
            <person name="Edwards N.J."/>
            <person name="Bolanos R."/>
            <person name="Fasulo D."/>
            <person name="Halldorsson B.V."/>
            <person name="Hannenhalli S."/>
            <person name="Turner R."/>
            <person name="Yooseph S."/>
            <person name="Lu F."/>
            <person name="Nusskern D.R."/>
            <person name="Shue B.C."/>
            <person name="Zheng X.H."/>
            <person name="Zhong F."/>
            <person name="Delcher A.L."/>
            <person name="Huson D.H."/>
            <person name="Kravitz S.A."/>
            <person name="Mouchard L."/>
            <person name="Reinert K."/>
            <person name="Remington K.A."/>
            <person name="Clark A.G."/>
            <person name="Waterman M.S."/>
            <person name="Eichler E.E."/>
            <person name="Adams M.D."/>
            <person name="Hunkapiller M.W."/>
            <person name="Myers E.W."/>
            <person name="Venter J.C."/>
        </authorList>
    </citation>
    <scope>NUCLEOTIDE SEQUENCE [LARGE SCALE GENOMIC DNA]</scope>
</reference>
<reference key="4">
    <citation type="journal article" date="2004" name="Genome Res.">
        <title>The status, quality, and expansion of the NIH full-length cDNA project: the Mammalian Gene Collection (MGC).</title>
        <authorList>
            <consortium name="The MGC Project Team"/>
        </authorList>
    </citation>
    <scope>NUCLEOTIDE SEQUENCE [LARGE SCALE MRNA] (ISOFORM 1)</scope>
    <source>
        <tissue>Testis</tissue>
    </source>
</reference>
<reference key="5">
    <citation type="journal article" date="2013" name="PLoS Genet.">
        <title>A newly uncovered group of distantly related lysine methyltransferases preferentially interact with molecular chaperones to regulate their activity.</title>
        <authorList>
            <person name="Cloutier P."/>
            <person name="Lavallee-Adam M."/>
            <person name="Faubert D."/>
            <person name="Blanchette M."/>
            <person name="Coulombe B."/>
        </authorList>
    </citation>
    <scope>INTERACTION WITH HSPA5; HSP90B1; TUBULIN; UGGT1 AND UGGT2</scope>
    <scope>SUBCELLULAR LOCATION</scope>
</reference>
<reference key="6">
    <citation type="journal article" date="2014" name="Hum. Mol. Genet.">
        <title>METTL23, a transcriptional partner of GABPA, is essential for human cognition.</title>
        <authorList>
            <person name="Reiff R.E."/>
            <person name="Ali B.R."/>
            <person name="Baron B."/>
            <person name="Yu T.W."/>
            <person name="Ben-Salem S."/>
            <person name="Coulter M.E."/>
            <person name="Schubert C.R."/>
            <person name="Hill R.S."/>
            <person name="Akawi N.A."/>
            <person name="Al-Younes B."/>
            <person name="Kaya N."/>
            <person name="Evrony G.D."/>
            <person name="Al-Saffar M."/>
            <person name="Felie J.M."/>
            <person name="Partlow J.N."/>
            <person name="Sunu C.M."/>
            <person name="Schembri-Wismayer P."/>
            <person name="Alkuraya F.S."/>
            <person name="Meyer B.F."/>
            <person name="Walsh C.A."/>
            <person name="Al-Gazali L."/>
            <person name="Mochida G.H."/>
        </authorList>
    </citation>
    <scope>INVOLVEMENT IN MRT44</scope>
    <scope>SUBCELLULAR LOCATION</scope>
</reference>
<reference key="7">
    <citation type="journal article" date="2014" name="Hum. Mol. Genet.">
        <title>Disruption of the methyltransferase-like 23 gene METTL23 causes mild autosomal recessive intellectual disability.</title>
        <authorList>
            <person name="Bernkopf M."/>
            <person name="Webersinke G."/>
            <person name="Tongsook C."/>
            <person name="Koyani C.N."/>
            <person name="Rafiq M.A."/>
            <person name="Ayaz M."/>
            <person name="Mueller D."/>
            <person name="Enzinger C."/>
            <person name="Aslam M."/>
            <person name="Naeem F."/>
            <person name="Schmidt K."/>
            <person name="Gruber K."/>
            <person name="Speicher M.R."/>
            <person name="Malle E."/>
            <person name="Macheroux P."/>
            <person name="Ayub M."/>
            <person name="Vincent J.B."/>
            <person name="Windpassinger C."/>
            <person name="Duba H.C."/>
        </authorList>
    </citation>
    <scope>INVOLVEMENT IN MRT44</scope>
    <scope>VARIANT MRT44 133-GLN--LEU-190 DEL</scope>
</reference>
<reference key="8">
    <citation type="journal article" date="2020" name="Am. J. Med. Genet. A">
        <title>Further delineation of METTL23-associated intellectual disability.</title>
        <authorList>
            <person name="Almannai M."/>
            <person name="Obaid O."/>
            <person name="Faqeih E."/>
            <person name="Alasmari A."/>
            <person name="Samman M.M."/>
            <person name="Pinz H."/>
            <person name="Braddock S.R."/>
            <person name="Alkuraya F.S."/>
        </authorList>
    </citation>
    <scope>INVOLVEMENT IN MRT44</scope>
    <scope>VARIANT MRT44 THR-150</scope>
</reference>
<reference key="9">
    <citation type="journal article" date="2020" name="Eur. J. Med. Genet.">
        <title>Exome sequencing revealed a novel homozygous METTL23 gene mutation leading to familial mild intellectual disability with dysmorphic features.</title>
        <authorList>
            <person name="Smaili W."/>
            <person name="Elalaoui S.C."/>
            <person name="Zrhidri A."/>
            <person name="Raymond L."/>
            <person name="Egea G."/>
            <person name="Taoudi M."/>
            <person name="Mouatassim S.E.L."/>
            <person name="Sefiani A."/>
            <person name="Lyahyai J."/>
        </authorList>
    </citation>
    <scope>INVOLVEMENT IN MRT44</scope>
</reference>
<gene>
    <name evidence="7 9" type="primary">METTL23</name>
    <name evidence="9" type="synonym">C17orf95</name>
</gene>
<keyword id="KW-0025">Alternative splicing</keyword>
<keyword id="KW-0156">Chromatin regulator</keyword>
<keyword id="KW-0963">Cytoplasm</keyword>
<keyword id="KW-0217">Developmental protein</keyword>
<keyword id="KW-0225">Disease variant</keyword>
<keyword id="KW-0991">Intellectual disability</keyword>
<keyword id="KW-0489">Methyltransferase</keyword>
<keyword id="KW-0539">Nucleus</keyword>
<keyword id="KW-1267">Proteomics identification</keyword>
<keyword id="KW-1185">Reference proteome</keyword>
<keyword id="KW-0949">S-adenosyl-L-methionine</keyword>
<keyword id="KW-0808">Transferase</keyword>
<protein>
    <recommendedName>
        <fullName evidence="8">Histone-arginine methyltransferase METTL23</fullName>
        <ecNumber evidence="1">2.1.1.319</ecNumber>
    </recommendedName>
    <alternativeName>
        <fullName evidence="8">Methyltransferase-like protein 23</fullName>
    </alternativeName>
</protein>
<accession>Q86XA0</accession>
<accession>H9ZYJ0</accession>
<accession>K7EK32</accession>
<feature type="chain" id="PRO_0000321520" description="Histone-arginine methyltransferase METTL23">
    <location>
        <begin position="1"/>
        <end position="190"/>
    </location>
</feature>
<feature type="splice variant" id="VSP_055637" description="In isoform 2." evidence="8">
    <location>
        <begin position="1"/>
        <end position="67"/>
    </location>
</feature>
<feature type="sequence variant" id="VAR_085971" description="In MRT44." evidence="4">
    <location>
        <begin position="133"/>
        <end position="190"/>
    </location>
</feature>
<feature type="sequence variant" id="VAR_039343" description="In dbSNP:rs12602772.">
    <original>L</original>
    <variation>V</variation>
    <location>
        <position position="141"/>
    </location>
</feature>
<feature type="sequence variant" id="VAR_085972" description="In MRT44; uncertain significance." evidence="5">
    <original>M</original>
    <variation>T</variation>
    <location>
        <position position="150"/>
    </location>
</feature>
<feature type="sequence conflict" description="In Ref. 4; AAH45819." evidence="8" ref="4">
    <original>D</original>
    <variation>G</variation>
    <location>
        <position position="138"/>
    </location>
</feature>
<name>MET23_HUMAN</name>
<comment type="function">
    <text evidence="1">Histone methyltransferase that dimethylates histone H3 at 'Arg-17', forming asymmetric dimethylarginine (H3R17me2a), leading to activate transcription via chromatin remodeling (By similarity). Maternal factor involved in epigenetic chromatin reprogramming of the paternal genome in the zygote: mediates H3R17me2a, promoting histone H3.3 incorporation in the male pronucleus, leading to TET3 recruitment and subsequent DNA demethylation (By similarity).</text>
</comment>
<comment type="catalytic activity">
    <reaction evidence="1">
        <text>L-arginyl-[protein] + 2 S-adenosyl-L-methionine = N(omega),N(omega)-dimethyl-L-arginyl-[protein] + 2 S-adenosyl-L-homocysteine + 2 H(+)</text>
        <dbReference type="Rhea" id="RHEA:48096"/>
        <dbReference type="Rhea" id="RHEA-COMP:10532"/>
        <dbReference type="Rhea" id="RHEA-COMP:11991"/>
        <dbReference type="ChEBI" id="CHEBI:15378"/>
        <dbReference type="ChEBI" id="CHEBI:29965"/>
        <dbReference type="ChEBI" id="CHEBI:57856"/>
        <dbReference type="ChEBI" id="CHEBI:59789"/>
        <dbReference type="ChEBI" id="CHEBI:61897"/>
        <dbReference type="EC" id="2.1.1.319"/>
    </reaction>
    <physiologicalReaction direction="left-to-right" evidence="1">
        <dbReference type="Rhea" id="RHEA:48097"/>
    </physiologicalReaction>
</comment>
<comment type="subunit">
    <text evidence="1 2">Interacts with HSPA5, HSP90B1, TUBULIN, UGGT1 and UGGT2 (PubMed:23349634). Interacts with TET3 (By similarity). Interacts with STPG4 (By similarity).</text>
</comment>
<comment type="subcellular location">
    <subcellularLocation>
        <location evidence="3">Nucleus</location>
    </subcellularLocation>
    <subcellularLocation>
        <location evidence="2 3">Cytoplasm</location>
    </subcellularLocation>
    <text evidence="1">Localizes in male and female zygote pronucleus and cytoplasm.</text>
</comment>
<comment type="alternative products">
    <event type="alternative splicing"/>
    <isoform>
        <id>Q86XA0-1</id>
        <name>1</name>
        <sequence type="displayed"/>
    </isoform>
    <isoform>
        <id>Q86XA0-2</id>
        <name>2</name>
        <sequence type="described" ref="VSP_055637"/>
    </isoform>
</comment>
<comment type="disease" evidence="3 4 5 6">
    <disease id="DI-04192">
        <name>Intellectual developmental disorder, autosomal recessive 44</name>
        <acronym>MRT44</acronym>
        <description>A disorder characterized by significantly below average general intellectual functioning associated with impairments in adaptive behavior and manifested during the developmental period. MRT44 manifestations include mild to severe cognitive impairment, delayed psychomotor development, seizures in some patients, and dysmorphic features.</description>
        <dbReference type="MIM" id="615942"/>
    </disease>
    <text>The disease is caused by variants affecting the gene represented in this entry.</text>
</comment>
<comment type="similarity">
    <text evidence="8">Belongs to the methyltransferase superfamily. METTL23 family.</text>
</comment>
<comment type="sequence caution" evidence="8">
    <conflict type="erroneous initiation">
        <sequence resource="EMBL-CDS" id="AAH45819"/>
    </conflict>
    <text>Extended N-terminus.</text>
</comment>
<evidence type="ECO:0000250" key="1">
    <source>
        <dbReference type="UniProtKB" id="A2AA28"/>
    </source>
</evidence>
<evidence type="ECO:0000269" key="2">
    <source>
    </source>
</evidence>
<evidence type="ECO:0000269" key="3">
    <source>
    </source>
</evidence>
<evidence type="ECO:0000269" key="4">
    <source>
    </source>
</evidence>
<evidence type="ECO:0000269" key="5">
    <source>
    </source>
</evidence>
<evidence type="ECO:0000269" key="6">
    <source>
    </source>
</evidence>
<evidence type="ECO:0000303" key="7">
    <source>
    </source>
</evidence>
<evidence type="ECO:0000305" key="8"/>
<evidence type="ECO:0000312" key="9">
    <source>
        <dbReference type="HGNC" id="HGNC:26988"/>
    </source>
</evidence>
<organism>
    <name type="scientific">Homo sapiens</name>
    <name type="common">Human</name>
    <dbReference type="NCBI Taxonomy" id="9606"/>
    <lineage>
        <taxon>Eukaryota</taxon>
        <taxon>Metazoa</taxon>
        <taxon>Chordata</taxon>
        <taxon>Craniata</taxon>
        <taxon>Vertebrata</taxon>
        <taxon>Euteleostomi</taxon>
        <taxon>Mammalia</taxon>
        <taxon>Eutheria</taxon>
        <taxon>Euarchontoglires</taxon>
        <taxon>Primates</taxon>
        <taxon>Haplorrhini</taxon>
        <taxon>Catarrhini</taxon>
        <taxon>Hominidae</taxon>
        <taxon>Homo</taxon>
    </lineage>
</organism>